<proteinExistence type="inferred from homology"/>
<protein>
    <recommendedName>
        <fullName>Probable UTP--glucose-1-phosphate uridylyltransferase</fullName>
        <ecNumber>2.7.7.9</ecNumber>
    </recommendedName>
    <alternativeName>
        <fullName>UDP-glucose pyrophosphorylase</fullName>
        <shortName>UDPGP</shortName>
        <shortName>UGPase</shortName>
    </alternativeName>
</protein>
<organism>
    <name type="scientific">Saccharomyces cerevisiae (strain ATCC 204508 / S288c)</name>
    <name type="common">Baker's yeast</name>
    <dbReference type="NCBI Taxonomy" id="559292"/>
    <lineage>
        <taxon>Eukaryota</taxon>
        <taxon>Fungi</taxon>
        <taxon>Dikarya</taxon>
        <taxon>Ascomycota</taxon>
        <taxon>Saccharomycotina</taxon>
        <taxon>Saccharomycetes</taxon>
        <taxon>Saccharomycetales</taxon>
        <taxon>Saccharomycetaceae</taxon>
        <taxon>Saccharomyces</taxon>
    </lineage>
</organism>
<dbReference type="EC" id="2.7.7.9"/>
<dbReference type="EMBL" id="U11582">
    <property type="protein sequence ID" value="AAB65065.1"/>
    <property type="molecule type" value="Genomic_DNA"/>
</dbReference>
<dbReference type="EMBL" id="BK006934">
    <property type="protein sequence ID" value="DAA06674.1"/>
    <property type="molecule type" value="Genomic_DNA"/>
</dbReference>
<dbReference type="PIR" id="S46826">
    <property type="entry name" value="S46826"/>
</dbReference>
<dbReference type="RefSeq" id="NP_011851.1">
    <property type="nucleotide sequence ID" value="NM_001179092.1"/>
</dbReference>
<dbReference type="SMR" id="P38709"/>
<dbReference type="BioGRID" id="36411">
    <property type="interactions" value="55"/>
</dbReference>
<dbReference type="FunCoup" id="P38709">
    <property type="interactions" value="241"/>
</dbReference>
<dbReference type="IntAct" id="P38709">
    <property type="interactions" value="1"/>
</dbReference>
<dbReference type="STRING" id="4932.YHL012W"/>
<dbReference type="PaxDb" id="4932-YHL012W"/>
<dbReference type="PeptideAtlas" id="P38709"/>
<dbReference type="TopDownProteomics" id="P38709"/>
<dbReference type="EnsemblFungi" id="YHL012W_mRNA">
    <property type="protein sequence ID" value="YHL012W"/>
    <property type="gene ID" value="YHL012W"/>
</dbReference>
<dbReference type="GeneID" id="856374"/>
<dbReference type="KEGG" id="sce:YHL012W"/>
<dbReference type="AGR" id="SGD:S000001004"/>
<dbReference type="SGD" id="S000001004">
    <property type="gene designation" value="YHL012W"/>
</dbReference>
<dbReference type="VEuPathDB" id="FungiDB:YHL012W"/>
<dbReference type="eggNOG" id="KOG2638">
    <property type="taxonomic scope" value="Eukaryota"/>
</dbReference>
<dbReference type="GeneTree" id="ENSGT00940000153464"/>
<dbReference type="HOGENOM" id="CLU_023632_0_0_1"/>
<dbReference type="InParanoid" id="P38709"/>
<dbReference type="OMA" id="KITHKNE"/>
<dbReference type="OrthoDB" id="932129at2759"/>
<dbReference type="BioGRID-ORCS" id="856374">
    <property type="hits" value="0 hits in 10 CRISPR screens"/>
</dbReference>
<dbReference type="PRO" id="PR:P38709"/>
<dbReference type="Proteomes" id="UP000002311">
    <property type="component" value="Chromosome VIII"/>
</dbReference>
<dbReference type="RNAct" id="P38709">
    <property type="molecule type" value="protein"/>
</dbReference>
<dbReference type="GO" id="GO:0005737">
    <property type="term" value="C:cytoplasm"/>
    <property type="evidence" value="ECO:0000318"/>
    <property type="project" value="GO_Central"/>
</dbReference>
<dbReference type="GO" id="GO:0003983">
    <property type="term" value="F:UTP:glucose-1-phosphate uridylyltransferase activity"/>
    <property type="evidence" value="ECO:0000318"/>
    <property type="project" value="GO_Central"/>
</dbReference>
<dbReference type="GO" id="GO:0005977">
    <property type="term" value="P:glycogen metabolic process"/>
    <property type="evidence" value="ECO:0000318"/>
    <property type="project" value="GO_Central"/>
</dbReference>
<dbReference type="GO" id="GO:0006011">
    <property type="term" value="P:UDP-alpha-D-glucose metabolic process"/>
    <property type="evidence" value="ECO:0000318"/>
    <property type="project" value="GO_Central"/>
</dbReference>
<dbReference type="FunFam" id="2.160.10.10:FF:000001">
    <property type="entry name" value="UTP--glucose-1-phosphate uridylyltransferase"/>
    <property type="match status" value="1"/>
</dbReference>
<dbReference type="Gene3D" id="2.160.10.10">
    <property type="entry name" value="Hexapeptide repeat proteins"/>
    <property type="match status" value="1"/>
</dbReference>
<dbReference type="Gene3D" id="3.90.550.10">
    <property type="entry name" value="Spore Coat Polysaccharide Biosynthesis Protein SpsA, Chain A"/>
    <property type="match status" value="1"/>
</dbReference>
<dbReference type="InterPro" id="IPR029044">
    <property type="entry name" value="Nucleotide-diphossugar_trans"/>
</dbReference>
<dbReference type="InterPro" id="IPR002618">
    <property type="entry name" value="UDPGP_fam"/>
</dbReference>
<dbReference type="InterPro" id="IPR016267">
    <property type="entry name" value="UDPGP_trans"/>
</dbReference>
<dbReference type="PANTHER" id="PTHR43511">
    <property type="match status" value="1"/>
</dbReference>
<dbReference type="Pfam" id="PF01704">
    <property type="entry name" value="UDPGP"/>
    <property type="match status" value="1"/>
</dbReference>
<dbReference type="PIRSF" id="PIRSF000806">
    <property type="entry name" value="UDPGP"/>
    <property type="match status" value="1"/>
</dbReference>
<dbReference type="SUPFAM" id="SSF53448">
    <property type="entry name" value="Nucleotide-diphospho-sugar transferases"/>
    <property type="match status" value="1"/>
</dbReference>
<keyword id="KW-0548">Nucleotidyltransferase</keyword>
<keyword id="KW-1185">Reference proteome</keyword>
<keyword id="KW-0808">Transferase</keyword>
<evidence type="ECO:0000250" key="1"/>
<evidence type="ECO:0000250" key="2">
    <source>
        <dbReference type="UniProtKB" id="Q16851"/>
    </source>
</evidence>
<evidence type="ECO:0000250" key="3">
    <source>
        <dbReference type="UniProtKB" id="Q9M9P3"/>
    </source>
</evidence>
<evidence type="ECO:0000305" key="4"/>
<comment type="function">
    <text evidence="1">Plays a central role as a glucosyl donor in cellular metabolic pathways.</text>
</comment>
<comment type="catalytic activity">
    <reaction>
        <text>alpha-D-glucose 1-phosphate + UTP + H(+) = UDP-alpha-D-glucose + diphosphate</text>
        <dbReference type="Rhea" id="RHEA:19889"/>
        <dbReference type="ChEBI" id="CHEBI:15378"/>
        <dbReference type="ChEBI" id="CHEBI:33019"/>
        <dbReference type="ChEBI" id="CHEBI:46398"/>
        <dbReference type="ChEBI" id="CHEBI:58601"/>
        <dbReference type="ChEBI" id="CHEBI:58885"/>
        <dbReference type="EC" id="2.7.7.9"/>
    </reaction>
</comment>
<comment type="similarity">
    <text evidence="4">Belongs to the UDPGP type 1 family.</text>
</comment>
<gene>
    <name type="ordered locus">YHL012W</name>
</gene>
<sequence>MTVFSGVNKIEFEGTFEGIGKDVVMSQMIRALQKHFPSIRDKNYEFSLFLHIFQRYVLENTSITHDLVCDKIRLPIIDEVVELDDIKNYGLLEGKLLSKLAILKLTGKANPIIGKESPLFEVKNGMSSLDVIVRQTQNLNVRYNSDVPLIFMTSLETESQVSNFLEEHYSSSKVRWKTVVQSSFPQIDKDRLLPIDLQINSHENDFWYPCGTGNLTDTLYFSGELDKLIAQGKEILFVSNVDNLGATGDLNILNFIINEKIEYLVEVVERTANVSNTGVLATYKGKLRSVYYNCLSNESASTCRIVNTNNIWIDLKKLKVLIESNSLNLPIHSSESKITHKNEEIECLQFKTQLVDCIAFFPNSRVLKVSRDRFLPLRTCKDLFLLKSTLYDLDSNGTFNLYPLKFGLLPSIDLGDEFATYETFKIGVPDIPNILELEHLTVMGNVFFGRNITLKGTVIIICDENDVITVPDGSILENVTIWHKSQLEDMNGY</sequence>
<accession>P38709</accession>
<accession>D3DKQ1</accession>
<name>UGPA2_YEAST</name>
<reference key="1">
    <citation type="journal article" date="1994" name="Science">
        <title>Complete nucleotide sequence of Saccharomyces cerevisiae chromosome VIII.</title>
        <authorList>
            <person name="Johnston M."/>
            <person name="Andrews S."/>
            <person name="Brinkman R."/>
            <person name="Cooper J."/>
            <person name="Ding H."/>
            <person name="Dover J."/>
            <person name="Du Z."/>
            <person name="Favello A."/>
            <person name="Fulton L."/>
            <person name="Gattung S."/>
            <person name="Geisel C."/>
            <person name="Kirsten J."/>
            <person name="Kucaba T."/>
            <person name="Hillier L.W."/>
            <person name="Jier M."/>
            <person name="Johnston L."/>
            <person name="Langston Y."/>
            <person name="Latreille P."/>
            <person name="Louis E.J."/>
            <person name="Macri C."/>
            <person name="Mardis E."/>
            <person name="Menezes S."/>
            <person name="Mouser L."/>
            <person name="Nhan M."/>
            <person name="Rifkin L."/>
            <person name="Riles L."/>
            <person name="St Peter H."/>
            <person name="Trevaskis E."/>
            <person name="Vaughan K."/>
            <person name="Vignati D."/>
            <person name="Wilcox L."/>
            <person name="Wohldman P."/>
            <person name="Waterston R."/>
            <person name="Wilson R."/>
            <person name="Vaudin M."/>
        </authorList>
    </citation>
    <scope>NUCLEOTIDE SEQUENCE [LARGE SCALE GENOMIC DNA]</scope>
    <source>
        <strain>ATCC 204508 / S288c</strain>
    </source>
</reference>
<reference key="2">
    <citation type="journal article" date="2014" name="G3 (Bethesda)">
        <title>The reference genome sequence of Saccharomyces cerevisiae: Then and now.</title>
        <authorList>
            <person name="Engel S.R."/>
            <person name="Dietrich F.S."/>
            <person name="Fisk D.G."/>
            <person name="Binkley G."/>
            <person name="Balakrishnan R."/>
            <person name="Costanzo M.C."/>
            <person name="Dwight S.S."/>
            <person name="Hitz B.C."/>
            <person name="Karra K."/>
            <person name="Nash R.S."/>
            <person name="Weng S."/>
            <person name="Wong E.D."/>
            <person name="Lloyd P."/>
            <person name="Skrzypek M.S."/>
            <person name="Miyasato S.R."/>
            <person name="Simison M."/>
            <person name="Cherry J.M."/>
        </authorList>
    </citation>
    <scope>GENOME REANNOTATION</scope>
    <source>
        <strain>ATCC 204508 / S288c</strain>
    </source>
</reference>
<feature type="chain" id="PRO_0000185766" description="Probable UTP--glucose-1-phosphate uridylyltransferase">
    <location>
        <begin position="1"/>
        <end position="493"/>
    </location>
</feature>
<feature type="binding site" evidence="3">
    <location>
        <begin position="105"/>
        <end position="108"/>
    </location>
    <ligand>
        <name>UTP</name>
        <dbReference type="ChEBI" id="CHEBI:46398"/>
    </ligand>
</feature>
<feature type="binding site" evidence="2">
    <location>
        <begin position="107"/>
        <end position="108"/>
    </location>
    <ligand>
        <name>substrate</name>
    </ligand>
</feature>
<feature type="binding site" evidence="3">
    <location>
        <position position="181"/>
    </location>
    <ligand>
        <name>UTP</name>
        <dbReference type="ChEBI" id="CHEBI:46398"/>
    </ligand>
</feature>
<feature type="binding site" evidence="3">
    <location>
        <position position="211"/>
    </location>
    <ligand>
        <name>UTP</name>
        <dbReference type="ChEBI" id="CHEBI:46398"/>
    </ligand>
</feature>
<feature type="binding site" evidence="2">
    <location>
        <begin position="240"/>
        <end position="242"/>
    </location>
    <ligand>
        <name>substrate</name>
    </ligand>
</feature>
<feature type="binding site" evidence="3">
    <location>
        <position position="242"/>
    </location>
    <ligand>
        <name>UTP</name>
        <dbReference type="ChEBI" id="CHEBI:46398"/>
    </ligand>
</feature>